<evidence type="ECO:0000250" key="1"/>
<evidence type="ECO:0000250" key="2">
    <source>
        <dbReference type="UniProtKB" id="P00157"/>
    </source>
</evidence>
<evidence type="ECO:0000255" key="3">
    <source>
        <dbReference type="PROSITE-ProRule" id="PRU00967"/>
    </source>
</evidence>
<evidence type="ECO:0000255" key="4">
    <source>
        <dbReference type="PROSITE-ProRule" id="PRU00968"/>
    </source>
</evidence>
<dbReference type="EMBL" id="AB175099">
    <property type="protein sequence ID" value="BAE92664.1"/>
    <property type="molecule type" value="Genomic_DNA"/>
</dbReference>
<dbReference type="EMBL" id="AB175100">
    <property type="protein sequence ID" value="BAE92665.1"/>
    <property type="molecule type" value="Genomic_DNA"/>
</dbReference>
<dbReference type="SMR" id="Q1XIN1"/>
<dbReference type="GO" id="GO:0005743">
    <property type="term" value="C:mitochondrial inner membrane"/>
    <property type="evidence" value="ECO:0007669"/>
    <property type="project" value="UniProtKB-SubCell"/>
</dbReference>
<dbReference type="GO" id="GO:0045275">
    <property type="term" value="C:respiratory chain complex III"/>
    <property type="evidence" value="ECO:0007669"/>
    <property type="project" value="InterPro"/>
</dbReference>
<dbReference type="GO" id="GO:0046872">
    <property type="term" value="F:metal ion binding"/>
    <property type="evidence" value="ECO:0007669"/>
    <property type="project" value="UniProtKB-KW"/>
</dbReference>
<dbReference type="GO" id="GO:0008121">
    <property type="term" value="F:ubiquinol-cytochrome-c reductase activity"/>
    <property type="evidence" value="ECO:0007669"/>
    <property type="project" value="InterPro"/>
</dbReference>
<dbReference type="GO" id="GO:0006122">
    <property type="term" value="P:mitochondrial electron transport, ubiquinol to cytochrome c"/>
    <property type="evidence" value="ECO:0007669"/>
    <property type="project" value="TreeGrafter"/>
</dbReference>
<dbReference type="CDD" id="cd00290">
    <property type="entry name" value="cytochrome_b_C"/>
    <property type="match status" value="1"/>
</dbReference>
<dbReference type="CDD" id="cd00284">
    <property type="entry name" value="Cytochrome_b_N"/>
    <property type="match status" value="1"/>
</dbReference>
<dbReference type="FunFam" id="1.20.810.10:FF:000002">
    <property type="entry name" value="Cytochrome b"/>
    <property type="match status" value="1"/>
</dbReference>
<dbReference type="Gene3D" id="1.20.810.10">
    <property type="entry name" value="Cytochrome Bc1 Complex, Chain C"/>
    <property type="match status" value="1"/>
</dbReference>
<dbReference type="InterPro" id="IPR005798">
    <property type="entry name" value="Cyt_b/b6_C"/>
</dbReference>
<dbReference type="InterPro" id="IPR036150">
    <property type="entry name" value="Cyt_b/b6_C_sf"/>
</dbReference>
<dbReference type="InterPro" id="IPR005797">
    <property type="entry name" value="Cyt_b/b6_N"/>
</dbReference>
<dbReference type="InterPro" id="IPR027387">
    <property type="entry name" value="Cytb/b6-like_sf"/>
</dbReference>
<dbReference type="InterPro" id="IPR030689">
    <property type="entry name" value="Cytochrome_b"/>
</dbReference>
<dbReference type="InterPro" id="IPR048260">
    <property type="entry name" value="Cytochrome_b_C_euk/bac"/>
</dbReference>
<dbReference type="InterPro" id="IPR048259">
    <property type="entry name" value="Cytochrome_b_N_euk/bac"/>
</dbReference>
<dbReference type="InterPro" id="IPR016174">
    <property type="entry name" value="Di-haem_cyt_TM"/>
</dbReference>
<dbReference type="PANTHER" id="PTHR19271">
    <property type="entry name" value="CYTOCHROME B"/>
    <property type="match status" value="1"/>
</dbReference>
<dbReference type="PANTHER" id="PTHR19271:SF16">
    <property type="entry name" value="CYTOCHROME B"/>
    <property type="match status" value="1"/>
</dbReference>
<dbReference type="Pfam" id="PF00032">
    <property type="entry name" value="Cytochrom_B_C"/>
    <property type="match status" value="1"/>
</dbReference>
<dbReference type="Pfam" id="PF00033">
    <property type="entry name" value="Cytochrome_B"/>
    <property type="match status" value="1"/>
</dbReference>
<dbReference type="PIRSF" id="PIRSF038885">
    <property type="entry name" value="COB"/>
    <property type="match status" value="1"/>
</dbReference>
<dbReference type="SUPFAM" id="SSF81648">
    <property type="entry name" value="a domain/subunit of cytochrome bc1 complex (Ubiquinol-cytochrome c reductase)"/>
    <property type="match status" value="1"/>
</dbReference>
<dbReference type="SUPFAM" id="SSF81342">
    <property type="entry name" value="Transmembrane di-heme cytochromes"/>
    <property type="match status" value="1"/>
</dbReference>
<dbReference type="PROSITE" id="PS51003">
    <property type="entry name" value="CYTB_CTER"/>
    <property type="match status" value="1"/>
</dbReference>
<dbReference type="PROSITE" id="PS51002">
    <property type="entry name" value="CYTB_NTER"/>
    <property type="match status" value="1"/>
</dbReference>
<geneLocation type="mitochondrion"/>
<keyword id="KW-0249">Electron transport</keyword>
<keyword id="KW-0349">Heme</keyword>
<keyword id="KW-0408">Iron</keyword>
<keyword id="KW-0472">Membrane</keyword>
<keyword id="KW-0479">Metal-binding</keyword>
<keyword id="KW-0496">Mitochondrion</keyword>
<keyword id="KW-0999">Mitochondrion inner membrane</keyword>
<keyword id="KW-0679">Respiratory chain</keyword>
<keyword id="KW-0812">Transmembrane</keyword>
<keyword id="KW-1133">Transmembrane helix</keyword>
<keyword id="KW-0813">Transport</keyword>
<keyword id="KW-0830">Ubiquinone</keyword>
<protein>
    <recommendedName>
        <fullName>Cytochrome b</fullName>
    </recommendedName>
    <alternativeName>
        <fullName>Complex III subunit 3</fullName>
    </alternativeName>
    <alternativeName>
        <fullName>Complex III subunit III</fullName>
    </alternativeName>
    <alternativeName>
        <fullName>Cytochrome b-c1 complex subunit 3</fullName>
    </alternativeName>
    <alternativeName>
        <fullName>Ubiquinol-cytochrome-c reductase complex cytochrome b subunit</fullName>
    </alternativeName>
</protein>
<feature type="chain" id="PRO_0000254836" description="Cytochrome b">
    <location>
        <begin position="1"/>
        <end position="379"/>
    </location>
</feature>
<feature type="transmembrane region" description="Helical" evidence="2">
    <location>
        <begin position="33"/>
        <end position="53"/>
    </location>
</feature>
<feature type="transmembrane region" description="Helical" evidence="2">
    <location>
        <begin position="77"/>
        <end position="98"/>
    </location>
</feature>
<feature type="transmembrane region" description="Helical" evidence="2">
    <location>
        <begin position="113"/>
        <end position="133"/>
    </location>
</feature>
<feature type="transmembrane region" description="Helical" evidence="2">
    <location>
        <begin position="178"/>
        <end position="198"/>
    </location>
</feature>
<feature type="transmembrane region" description="Helical" evidence="2">
    <location>
        <begin position="226"/>
        <end position="246"/>
    </location>
</feature>
<feature type="transmembrane region" description="Helical" evidence="2">
    <location>
        <begin position="288"/>
        <end position="308"/>
    </location>
</feature>
<feature type="transmembrane region" description="Helical" evidence="2">
    <location>
        <begin position="320"/>
        <end position="340"/>
    </location>
</feature>
<feature type="transmembrane region" description="Helical" evidence="2">
    <location>
        <begin position="347"/>
        <end position="367"/>
    </location>
</feature>
<feature type="binding site" description="axial binding residue" evidence="2">
    <location>
        <position position="83"/>
    </location>
    <ligand>
        <name>heme b</name>
        <dbReference type="ChEBI" id="CHEBI:60344"/>
        <label>b562</label>
    </ligand>
    <ligandPart>
        <name>Fe</name>
        <dbReference type="ChEBI" id="CHEBI:18248"/>
    </ligandPart>
</feature>
<feature type="binding site" description="axial binding residue" evidence="2">
    <location>
        <position position="97"/>
    </location>
    <ligand>
        <name>heme b</name>
        <dbReference type="ChEBI" id="CHEBI:60344"/>
        <label>b566</label>
    </ligand>
    <ligandPart>
        <name>Fe</name>
        <dbReference type="ChEBI" id="CHEBI:18248"/>
    </ligandPart>
</feature>
<feature type="binding site" description="axial binding residue" evidence="2">
    <location>
        <position position="182"/>
    </location>
    <ligand>
        <name>heme b</name>
        <dbReference type="ChEBI" id="CHEBI:60344"/>
        <label>b562</label>
    </ligand>
    <ligandPart>
        <name>Fe</name>
        <dbReference type="ChEBI" id="CHEBI:18248"/>
    </ligandPart>
</feature>
<feature type="binding site" description="axial binding residue" evidence="2">
    <location>
        <position position="196"/>
    </location>
    <ligand>
        <name>heme b</name>
        <dbReference type="ChEBI" id="CHEBI:60344"/>
        <label>b566</label>
    </ligand>
    <ligandPart>
        <name>Fe</name>
        <dbReference type="ChEBI" id="CHEBI:18248"/>
    </ligandPart>
</feature>
<feature type="binding site" evidence="2">
    <location>
        <position position="201"/>
    </location>
    <ligand>
        <name>a ubiquinone</name>
        <dbReference type="ChEBI" id="CHEBI:16389"/>
    </ligand>
</feature>
<gene>
    <name type="primary">MT-CYB</name>
    <name type="synonym">COB</name>
    <name type="synonym">CYTB</name>
    <name type="synonym">MTCYB</name>
</gene>
<accession>Q1XIN1</accession>
<sequence>MTNLRKTHPLMKILNKSFIDLPAPSNITSWWNFGSLLGICLIIQILTGLFLAMHYTSDTMTAFSSVTHICRDVNYGWLIRYLHANGASMFFICLFLHVGRGLYYGSYLFLETWNIGVLLLFAVMATAFMGYVLPWGQMSFWGATVITNLLSAIPYIGSDLVEWIWGGFSVDKATLTRFFAFHFILPFIIAALAGVHLLFLHETGSNNPTGIPSDADKIPFHPYYTIKDILGVILLVLILTSLVLFSPDLLGDPDNYTPANPLNTPPHIKPEWYFLLAYAILRSIPNKLGGVLALVLSILILALMPLLHTAKQRSMMFRPFSQCLFWILVADLITLTWIGGQPVEHPYIIIGQLASILYFLLILVLMPITSLLENNMLKW</sequence>
<organism>
    <name type="scientific">Neomys anomalus</name>
    <name type="common">Miller's water shrew</name>
    <name type="synonym">Southern water shrew</name>
    <dbReference type="NCBI Taxonomy" id="52814"/>
    <lineage>
        <taxon>Eukaryota</taxon>
        <taxon>Metazoa</taxon>
        <taxon>Chordata</taxon>
        <taxon>Craniata</taxon>
        <taxon>Vertebrata</taxon>
        <taxon>Euteleostomi</taxon>
        <taxon>Mammalia</taxon>
        <taxon>Eutheria</taxon>
        <taxon>Laurasiatheria</taxon>
        <taxon>Eulipotyphla</taxon>
        <taxon>Soricidae</taxon>
        <taxon>Soricinae</taxon>
        <taxon>Neomys</taxon>
    </lineage>
</organism>
<proteinExistence type="inferred from homology"/>
<comment type="function">
    <text evidence="2">Component of the ubiquinol-cytochrome c reductase complex (complex III or cytochrome b-c1 complex) that is part of the mitochondrial respiratory chain. The b-c1 complex mediates electron transfer from ubiquinol to cytochrome c. Contributes to the generation of a proton gradient across the mitochondrial membrane that is then used for ATP synthesis.</text>
</comment>
<comment type="cofactor">
    <cofactor evidence="2">
        <name>heme b</name>
        <dbReference type="ChEBI" id="CHEBI:60344"/>
    </cofactor>
    <text evidence="2">Binds 2 heme b groups non-covalently.</text>
</comment>
<comment type="subunit">
    <text evidence="2">The cytochrome bc1 complex contains 11 subunits: 3 respiratory subunits (MT-CYB, CYC1 and UQCRFS1), 2 core proteins (UQCRC1 and UQCRC2) and 6 low-molecular weight proteins (UQCRH/QCR6, UQCRB/QCR7, UQCRQ/QCR8, UQCR10/QCR9, UQCR11/QCR10 and a cleavage product of UQCRFS1). This cytochrome bc1 complex then forms a dimer.</text>
</comment>
<comment type="subcellular location">
    <subcellularLocation>
        <location evidence="2">Mitochondrion inner membrane</location>
        <topology evidence="2">Multi-pass membrane protein</topology>
    </subcellularLocation>
</comment>
<comment type="miscellaneous">
    <text evidence="1">Heme 1 (or BL or b562) is low-potential and absorbs at about 562 nm, and heme 2 (or BH or b566) is high-potential and absorbs at about 566 nm.</text>
</comment>
<comment type="similarity">
    <text evidence="3 4">Belongs to the cytochrome b family.</text>
</comment>
<comment type="caution">
    <text evidence="2">The full-length protein contains only eight transmembrane helices, not nine as predicted by bioinformatics tools.</text>
</comment>
<reference key="1">
    <citation type="submission" date="2004-03" db="EMBL/GenBank/DDBJ databases">
        <title>Molecular phylogenetics of the Soricidae (Insectivora, Mammalia) based on mitochondrial cytochrome b gene sequences.</title>
        <authorList>
            <person name="Ohdachi S.D."/>
            <person name="Iwasa M.A."/>
            <person name="Abe H."/>
            <person name="Vogel P."/>
            <person name="Oshida T."/>
            <person name="Lin L.K."/>
            <person name="Hasegawa M."/>
        </authorList>
    </citation>
    <scope>NUCLEOTIDE SEQUENCE [GENOMIC DNA]</scope>
    <source>
        <tissue>Liver</tissue>
    </source>
</reference>
<name>CYB_NEOAN</name>